<proteinExistence type="inferred from homology"/>
<comment type="function">
    <text evidence="1">NDH-1 shuttles electrons from NADH, via FMN and iron-sulfur (Fe-S) centers, to quinones in the respiratory chain. The immediate electron acceptor for the enzyme in this species is believed to be ubiquinone. Couples the redox reaction to proton translocation (for every two electrons transferred, four hydrogen ions are translocated across the cytoplasmic membrane), and thus conserves the redox energy in a proton gradient.</text>
</comment>
<comment type="catalytic activity">
    <reaction evidence="1">
        <text>a quinone + NADH + 5 H(+)(in) = a quinol + NAD(+) + 4 H(+)(out)</text>
        <dbReference type="Rhea" id="RHEA:57888"/>
        <dbReference type="ChEBI" id="CHEBI:15378"/>
        <dbReference type="ChEBI" id="CHEBI:24646"/>
        <dbReference type="ChEBI" id="CHEBI:57540"/>
        <dbReference type="ChEBI" id="CHEBI:57945"/>
        <dbReference type="ChEBI" id="CHEBI:132124"/>
    </reaction>
</comment>
<comment type="subunit">
    <text evidence="1">NDH-1 is composed of 14 different subunits. Subunits NuoA, H, J, K, L, M, N constitute the membrane sector of the complex.</text>
</comment>
<comment type="subcellular location">
    <subcellularLocation>
        <location evidence="1">Cell inner membrane</location>
        <topology evidence="1">Multi-pass membrane protein</topology>
    </subcellularLocation>
</comment>
<comment type="similarity">
    <text evidence="1">Belongs to the complex I subunit 3 family.</text>
</comment>
<feature type="chain" id="PRO_0000117872" description="NADH-quinone oxidoreductase subunit A 1">
    <location>
        <begin position="1"/>
        <end position="121"/>
    </location>
</feature>
<feature type="transmembrane region" description="Helical" evidence="1">
    <location>
        <begin position="11"/>
        <end position="31"/>
    </location>
</feature>
<feature type="transmembrane region" description="Helical" evidence="1">
    <location>
        <begin position="65"/>
        <end position="85"/>
    </location>
</feature>
<feature type="transmembrane region" description="Helical" evidence="1">
    <location>
        <begin position="90"/>
        <end position="110"/>
    </location>
</feature>
<accession>O68852</accession>
<organism>
    <name type="scientific">Rhizobium meliloti (strain 1021)</name>
    <name type="common">Ensifer meliloti</name>
    <name type="synonym">Sinorhizobium meliloti</name>
    <dbReference type="NCBI Taxonomy" id="266834"/>
    <lineage>
        <taxon>Bacteria</taxon>
        <taxon>Pseudomonadati</taxon>
        <taxon>Pseudomonadota</taxon>
        <taxon>Alphaproteobacteria</taxon>
        <taxon>Hyphomicrobiales</taxon>
        <taxon>Rhizobiaceae</taxon>
        <taxon>Sinorhizobium/Ensifer group</taxon>
        <taxon>Sinorhizobium</taxon>
    </lineage>
</organism>
<keyword id="KW-0997">Cell inner membrane</keyword>
<keyword id="KW-1003">Cell membrane</keyword>
<keyword id="KW-0472">Membrane</keyword>
<keyword id="KW-0520">NAD</keyword>
<keyword id="KW-0874">Quinone</keyword>
<keyword id="KW-1185">Reference proteome</keyword>
<keyword id="KW-1278">Translocase</keyword>
<keyword id="KW-0812">Transmembrane</keyword>
<keyword id="KW-1133">Transmembrane helix</keyword>
<keyword id="KW-0813">Transport</keyword>
<keyword id="KW-0830">Ubiquinone</keyword>
<dbReference type="EC" id="7.1.1.-" evidence="1"/>
<dbReference type="EMBL" id="AF055637">
    <property type="protein sequence ID" value="AAC12754.1"/>
    <property type="molecule type" value="Genomic_DNA"/>
</dbReference>
<dbReference type="EMBL" id="AJ245398">
    <property type="protein sequence ID" value="CAB51620.1"/>
    <property type="molecule type" value="Genomic_DNA"/>
</dbReference>
<dbReference type="EMBL" id="AL591688">
    <property type="protein sequence ID" value="CAC45843.1"/>
    <property type="molecule type" value="Genomic_DNA"/>
</dbReference>
<dbReference type="RefSeq" id="NP_385370.1">
    <property type="nucleotide sequence ID" value="NC_003047.1"/>
</dbReference>
<dbReference type="RefSeq" id="WP_003531826.1">
    <property type="nucleotide sequence ID" value="NC_003047.1"/>
</dbReference>
<dbReference type="SMR" id="O68852"/>
<dbReference type="EnsemblBacteria" id="CAC45843">
    <property type="protein sequence ID" value="CAC45843"/>
    <property type="gene ID" value="SMc01912"/>
</dbReference>
<dbReference type="KEGG" id="sme:SMc01912"/>
<dbReference type="PATRIC" id="fig|266834.11.peg.2678"/>
<dbReference type="eggNOG" id="COG0838">
    <property type="taxonomic scope" value="Bacteria"/>
</dbReference>
<dbReference type="HOGENOM" id="CLU_119549_3_1_5"/>
<dbReference type="OrthoDB" id="9791970at2"/>
<dbReference type="Proteomes" id="UP000001976">
    <property type="component" value="Chromosome"/>
</dbReference>
<dbReference type="GO" id="GO:0030964">
    <property type="term" value="C:NADH dehydrogenase complex"/>
    <property type="evidence" value="ECO:0007669"/>
    <property type="project" value="TreeGrafter"/>
</dbReference>
<dbReference type="GO" id="GO:0005886">
    <property type="term" value="C:plasma membrane"/>
    <property type="evidence" value="ECO:0007669"/>
    <property type="project" value="UniProtKB-SubCell"/>
</dbReference>
<dbReference type="GO" id="GO:0008137">
    <property type="term" value="F:NADH dehydrogenase (ubiquinone) activity"/>
    <property type="evidence" value="ECO:0007669"/>
    <property type="project" value="InterPro"/>
</dbReference>
<dbReference type="GO" id="GO:0050136">
    <property type="term" value="F:NADH:ubiquinone reductase (non-electrogenic) activity"/>
    <property type="evidence" value="ECO:0007669"/>
    <property type="project" value="UniProtKB-UniRule"/>
</dbReference>
<dbReference type="GO" id="GO:0048038">
    <property type="term" value="F:quinone binding"/>
    <property type="evidence" value="ECO:0007669"/>
    <property type="project" value="UniProtKB-KW"/>
</dbReference>
<dbReference type="FunFam" id="1.20.58.1610:FF:000004">
    <property type="entry name" value="NADH-quinone oxidoreductase subunit A"/>
    <property type="match status" value="1"/>
</dbReference>
<dbReference type="Gene3D" id="1.20.58.1610">
    <property type="entry name" value="NADH:ubiquinone/plastoquinone oxidoreductase, chain 3"/>
    <property type="match status" value="1"/>
</dbReference>
<dbReference type="HAMAP" id="MF_01394">
    <property type="entry name" value="NDH1_NuoA"/>
    <property type="match status" value="1"/>
</dbReference>
<dbReference type="InterPro" id="IPR023043">
    <property type="entry name" value="NAD(P)H_OxRDtase_bac/plastid"/>
</dbReference>
<dbReference type="InterPro" id="IPR000440">
    <property type="entry name" value="NADH_UbQ/plastoQ_OxRdtase_su3"/>
</dbReference>
<dbReference type="InterPro" id="IPR038430">
    <property type="entry name" value="NDAH_ubi_oxred_su3_sf"/>
</dbReference>
<dbReference type="PANTHER" id="PTHR11058">
    <property type="entry name" value="NADH-UBIQUINONE OXIDOREDUCTASE CHAIN 3"/>
    <property type="match status" value="1"/>
</dbReference>
<dbReference type="PANTHER" id="PTHR11058:SF9">
    <property type="entry name" value="NADH-UBIQUINONE OXIDOREDUCTASE CHAIN 3"/>
    <property type="match status" value="1"/>
</dbReference>
<dbReference type="Pfam" id="PF00507">
    <property type="entry name" value="Oxidored_q4"/>
    <property type="match status" value="1"/>
</dbReference>
<evidence type="ECO:0000255" key="1">
    <source>
        <dbReference type="HAMAP-Rule" id="MF_01394"/>
    </source>
</evidence>
<gene>
    <name evidence="1" type="primary">nuoA1</name>
    <name type="synonym">nuoA</name>
    <name type="ordered locus">R01264</name>
    <name type="ORF">SMc01912</name>
</gene>
<sequence length="121" mass="13804">MTELLGSYVPIAIFIGIALVIGLALLVAPFAVAFKAPDSEKLSAYECGFNAFDDARMKFDVRFYLVSILFIIFDLEVAFLFPWAVSFKEMGWFGFWSMMVFLLVLTVGFIYEWKKGALEWN</sequence>
<reference key="1">
    <citation type="submission" date="1998-03" db="EMBL/GenBank/DDBJ databases">
        <title>Sinorhizobium meliloti mutant strain SP10 which is impaired in stationary phase survival shows a reduction in the energy charge due to its defect in the energy-conserving NADH dehydrogenase.</title>
        <authorList>
            <person name="Schmidt R."/>
            <person name="Uhde C."/>
            <person name="Nagel A."/>
            <person name="Puehler A."/>
            <person name="Selbitschka W."/>
        </authorList>
    </citation>
    <scope>NUCLEOTIDE SEQUENCE [GENOMIC DNA]</scope>
    <source>
        <strain>RCR2011 / SU47</strain>
    </source>
</reference>
<reference key="2">
    <citation type="submission" date="1999-07" db="EMBL/GenBank/DDBJ databases">
        <title>Rhizobium meliloti carries two sets of nuo genes.</title>
        <authorList>
            <person name="Putnoky P."/>
            <person name="Jady B."/>
            <person name="Chellapilla K.P."/>
            <person name="Barta F."/>
            <person name="Kiss E."/>
        </authorList>
    </citation>
    <scope>NUCLEOTIDE SEQUENCE [GENOMIC DNA]</scope>
    <source>
        <strain>41</strain>
    </source>
</reference>
<reference key="3">
    <citation type="journal article" date="2001" name="Proc. Natl. Acad. Sci. U.S.A.">
        <title>Analysis of the chromosome sequence of the legume symbiont Sinorhizobium meliloti strain 1021.</title>
        <authorList>
            <person name="Capela D."/>
            <person name="Barloy-Hubler F."/>
            <person name="Gouzy J."/>
            <person name="Bothe G."/>
            <person name="Ampe F."/>
            <person name="Batut J."/>
            <person name="Boistard P."/>
            <person name="Becker A."/>
            <person name="Boutry M."/>
            <person name="Cadieu E."/>
            <person name="Dreano S."/>
            <person name="Gloux S."/>
            <person name="Godrie T."/>
            <person name="Goffeau A."/>
            <person name="Kahn D."/>
            <person name="Kiss E."/>
            <person name="Lelaure V."/>
            <person name="Masuy D."/>
            <person name="Pohl T."/>
            <person name="Portetelle D."/>
            <person name="Puehler A."/>
            <person name="Purnelle B."/>
            <person name="Ramsperger U."/>
            <person name="Renard C."/>
            <person name="Thebault P."/>
            <person name="Vandenbol M."/>
            <person name="Weidner S."/>
            <person name="Galibert F."/>
        </authorList>
    </citation>
    <scope>NUCLEOTIDE SEQUENCE [LARGE SCALE GENOMIC DNA]</scope>
    <source>
        <strain>1021</strain>
    </source>
</reference>
<reference key="4">
    <citation type="journal article" date="2001" name="Science">
        <title>The composite genome of the legume symbiont Sinorhizobium meliloti.</title>
        <authorList>
            <person name="Galibert F."/>
            <person name="Finan T.M."/>
            <person name="Long S.R."/>
            <person name="Puehler A."/>
            <person name="Abola P."/>
            <person name="Ampe F."/>
            <person name="Barloy-Hubler F."/>
            <person name="Barnett M.J."/>
            <person name="Becker A."/>
            <person name="Boistard P."/>
            <person name="Bothe G."/>
            <person name="Boutry M."/>
            <person name="Bowser L."/>
            <person name="Buhrmester J."/>
            <person name="Cadieu E."/>
            <person name="Capela D."/>
            <person name="Chain P."/>
            <person name="Cowie A."/>
            <person name="Davis R.W."/>
            <person name="Dreano S."/>
            <person name="Federspiel N.A."/>
            <person name="Fisher R.F."/>
            <person name="Gloux S."/>
            <person name="Godrie T."/>
            <person name="Goffeau A."/>
            <person name="Golding B."/>
            <person name="Gouzy J."/>
            <person name="Gurjal M."/>
            <person name="Hernandez-Lucas I."/>
            <person name="Hong A."/>
            <person name="Huizar L."/>
            <person name="Hyman R.W."/>
            <person name="Jones T."/>
            <person name="Kahn D."/>
            <person name="Kahn M.L."/>
            <person name="Kalman S."/>
            <person name="Keating D.H."/>
            <person name="Kiss E."/>
            <person name="Komp C."/>
            <person name="Lelaure V."/>
            <person name="Masuy D."/>
            <person name="Palm C."/>
            <person name="Peck M.C."/>
            <person name="Pohl T.M."/>
            <person name="Portetelle D."/>
            <person name="Purnelle B."/>
            <person name="Ramsperger U."/>
            <person name="Surzycki R."/>
            <person name="Thebault P."/>
            <person name="Vandenbol M."/>
            <person name="Vorhoelter F.J."/>
            <person name="Weidner S."/>
            <person name="Wells D.H."/>
            <person name="Wong K."/>
            <person name="Yeh K.-C."/>
            <person name="Batut J."/>
        </authorList>
    </citation>
    <scope>NUCLEOTIDE SEQUENCE [LARGE SCALE GENOMIC DNA]</scope>
    <source>
        <strain>1021</strain>
    </source>
</reference>
<name>NUOA1_RHIME</name>
<protein>
    <recommendedName>
        <fullName evidence="1">NADH-quinone oxidoreductase subunit A 1</fullName>
        <ecNumber evidence="1">7.1.1.-</ecNumber>
    </recommendedName>
    <alternativeName>
        <fullName evidence="1">NADH dehydrogenase I subunit A 1</fullName>
    </alternativeName>
    <alternativeName>
        <fullName evidence="1">NDH-1 subunit A 1</fullName>
    </alternativeName>
    <alternativeName>
        <fullName evidence="1">NUO1 1</fullName>
    </alternativeName>
</protein>